<feature type="transit peptide" description="Mitochondrion" evidence="4">
    <location>
        <begin position="1" status="less than"/>
        <end position="19"/>
    </location>
</feature>
<feature type="chain" id="PRO_5000070424" description="Dihydrolipoyl dehydrogenase, mitochondrial" evidence="4">
    <location>
        <begin position="20"/>
        <end position="479" status="greater than"/>
    </location>
</feature>
<feature type="active site" description="Proton acceptor" evidence="3">
    <location>
        <position position="471"/>
    </location>
</feature>
<feature type="binding site" evidence="2">
    <location>
        <begin position="55"/>
        <end position="64"/>
    </location>
    <ligand>
        <name>FAD</name>
        <dbReference type="ChEBI" id="CHEBI:57692"/>
    </ligand>
</feature>
<feature type="binding site" evidence="2">
    <location>
        <position position="73"/>
    </location>
    <ligand>
        <name>FAD</name>
        <dbReference type="ChEBI" id="CHEBI:57692"/>
    </ligand>
</feature>
<feature type="binding site" evidence="2">
    <location>
        <position position="138"/>
    </location>
    <ligand>
        <name>FAD</name>
        <dbReference type="ChEBI" id="CHEBI:57692"/>
    </ligand>
</feature>
<feature type="binding site" evidence="2">
    <location>
        <begin position="167"/>
        <end position="169"/>
    </location>
    <ligand>
        <name>FAD</name>
        <dbReference type="ChEBI" id="CHEBI:57692"/>
    </ligand>
</feature>
<feature type="binding site" evidence="2">
    <location>
        <begin position="204"/>
        <end position="211"/>
    </location>
    <ligand>
        <name>NAD(+)</name>
        <dbReference type="ChEBI" id="CHEBI:57540"/>
    </ligand>
</feature>
<feature type="binding site" evidence="2">
    <location>
        <position position="227"/>
    </location>
    <ligand>
        <name>NAD(+)</name>
        <dbReference type="ChEBI" id="CHEBI:57540"/>
    </ligand>
</feature>
<feature type="binding site" evidence="2">
    <location>
        <position position="262"/>
    </location>
    <ligand>
        <name>NAD(+)</name>
        <dbReference type="ChEBI" id="CHEBI:57540"/>
    </ligand>
</feature>
<feature type="binding site" evidence="2">
    <location>
        <position position="298"/>
    </location>
    <ligand>
        <name>NAD(+)</name>
        <dbReference type="ChEBI" id="CHEBI:57540"/>
    </ligand>
</feature>
<feature type="binding site" evidence="2">
    <location>
        <position position="339"/>
    </location>
    <ligand>
        <name>FAD</name>
        <dbReference type="ChEBI" id="CHEBI:57692"/>
    </ligand>
</feature>
<feature type="binding site" evidence="2">
    <location>
        <begin position="345"/>
        <end position="348"/>
    </location>
    <ligand>
        <name>FAD</name>
        <dbReference type="ChEBI" id="CHEBI:57692"/>
    </ligand>
</feature>
<feature type="site" description="Important for interaction with PDHX and activity of pyruvate dehydrogenase complex" evidence="2">
    <location>
        <position position="432"/>
    </location>
</feature>
<feature type="site" description="Important for interaction with PDHX and activity of pyruvate dehydrogenase complex" evidence="2">
    <location>
        <position position="457"/>
    </location>
</feature>
<feature type="modified residue" description="N6-acetyllysine; alternate" evidence="1">
    <location>
        <position position="50"/>
    </location>
</feature>
<feature type="modified residue" description="N6-succinyllysine; alternate" evidence="1">
    <location>
        <position position="50"/>
    </location>
</feature>
<feature type="modified residue" description="N6-acetyllysine; alternate" evidence="1">
    <location>
        <position position="88"/>
    </location>
</feature>
<feature type="modified residue" description="N6-succinyllysine; alternate" evidence="1">
    <location>
        <position position="88"/>
    </location>
</feature>
<feature type="modified residue" description="N6-acetyllysine; alternate" evidence="1">
    <location>
        <position position="106"/>
    </location>
</feature>
<feature type="modified residue" description="N6-succinyllysine; alternate" evidence="1">
    <location>
        <position position="106"/>
    </location>
</feature>
<feature type="modified residue" description="N6-acetyllysine; alternate" evidence="1">
    <location>
        <position position="116"/>
    </location>
</feature>
<feature type="modified residue" description="N6-succinyllysine; alternate" evidence="1">
    <location>
        <position position="116"/>
    </location>
</feature>
<feature type="modified residue" description="N6-acetyllysine; alternate" evidence="2">
    <location>
        <position position="127"/>
    </location>
</feature>
<feature type="modified residue" description="N6-succinyllysine; alternate" evidence="1">
    <location>
        <position position="127"/>
    </location>
</feature>
<feature type="modified residue" description="N6-succinyllysine" evidence="1">
    <location>
        <position position="143"/>
    </location>
</feature>
<feature type="modified residue" description="N6-succinyllysine" evidence="1">
    <location>
        <position position="150"/>
    </location>
</feature>
<feature type="modified residue" description="N6-succinyllysine" evidence="1">
    <location>
        <position position="257"/>
    </location>
</feature>
<feature type="modified residue" description="N6-succinyllysine" evidence="1">
    <location>
        <position position="261"/>
    </location>
</feature>
<feature type="modified residue" description="Phosphoserine" evidence="1">
    <location>
        <position position="269"/>
    </location>
</feature>
<feature type="modified residue" description="N6-acetyllysine" evidence="1">
    <location>
        <position position="330"/>
    </location>
</feature>
<feature type="modified residue" description="N6-acetyllysine; alternate" evidence="2">
    <location>
        <position position="394"/>
    </location>
</feature>
<feature type="modified residue" description="N6-succinyllysine; alternate" evidence="1">
    <location>
        <position position="394"/>
    </location>
</feature>
<feature type="modified residue" description="N6-acetyllysine" evidence="2">
    <location>
        <position position="401"/>
    </location>
</feature>
<feature type="modified residue" description="N6-acetyllysine" evidence="1">
    <location>
        <position position="404"/>
    </location>
</feature>
<feature type="modified residue" description="N6-succinyllysine" evidence="1">
    <location>
        <position position="414"/>
    </location>
</feature>
<feature type="disulfide bond" description="Redox-active" evidence="3">
    <location>
        <begin position="64"/>
        <end position="69"/>
    </location>
</feature>
<feature type="non-terminal residue" evidence="7">
    <location>
        <position position="1"/>
    </location>
</feature>
<feature type="non-terminal residue" evidence="7">
    <location>
        <position position="479"/>
    </location>
</feature>
<keyword id="KW-0007">Acetylation</keyword>
<keyword id="KW-0966">Cell projection</keyword>
<keyword id="KW-0969">Cilium</keyword>
<keyword id="KW-0968">Cytoplasmic vesicle</keyword>
<keyword id="KW-0903">Direct protein sequencing</keyword>
<keyword id="KW-1015">Disulfide bond</keyword>
<keyword id="KW-0274">FAD</keyword>
<keyword id="KW-0282">Flagellum</keyword>
<keyword id="KW-0285">Flavoprotein</keyword>
<keyword id="KW-0496">Mitochondrion</keyword>
<keyword id="KW-0520">NAD</keyword>
<keyword id="KW-0539">Nucleus</keyword>
<keyword id="KW-0560">Oxidoreductase</keyword>
<keyword id="KW-0597">Phosphoprotein</keyword>
<keyword id="KW-0676">Redox-active center</keyword>
<keyword id="KW-1185">Reference proteome</keyword>
<keyword id="KW-0809">Transit peptide</keyword>
<proteinExistence type="evidence at protein level"/>
<comment type="function">
    <text evidence="2 4 5">Lipoamide dehydrogenase is a component of the glycine cleavage system as well as an E3 component of three alpha-ketoacid dehydrogenase complexes (pyruvate-, alpha-ketoglutarate-, and branched-chain amino acid-dehydrogenase complex) (PubMed:15888450). The 2-oxoglutarate dehydrogenase complex is mainly active in the mitochondrion (By similarity). A fraction of the 2-oxoglutarate dehydrogenase complex also localizes in the nucleus and is required for lysine succinylation of histones: associates with KAT2A on chromatin and provides succinyl-CoA to histone succinyltransferase KAT2A (By similarity). In monomeric form may have additional moonlighting function as serine protease (By similarity). Involved in the hyperactivation of spermatazoa during capacitation and in the spermatazoal acrosome reaction (PubMed:14645106, PubMed:15888450).</text>
</comment>
<comment type="catalytic activity">
    <reaction evidence="5">
        <text>N(6)-[(R)-dihydrolipoyl]-L-lysyl-[protein] + NAD(+) = N(6)-[(R)-lipoyl]-L-lysyl-[protein] + NADH + H(+)</text>
        <dbReference type="Rhea" id="RHEA:15045"/>
        <dbReference type="Rhea" id="RHEA-COMP:10474"/>
        <dbReference type="Rhea" id="RHEA-COMP:10475"/>
        <dbReference type="ChEBI" id="CHEBI:15378"/>
        <dbReference type="ChEBI" id="CHEBI:57540"/>
        <dbReference type="ChEBI" id="CHEBI:57945"/>
        <dbReference type="ChEBI" id="CHEBI:83099"/>
        <dbReference type="ChEBI" id="CHEBI:83100"/>
        <dbReference type="EC" id="1.8.1.4"/>
    </reaction>
</comment>
<comment type="cofactor">
    <cofactor evidence="2">
        <name>FAD</name>
        <dbReference type="ChEBI" id="CHEBI:57692"/>
    </cofactor>
    <text evidence="2">Binds 1 FAD per subunit.</text>
</comment>
<comment type="subunit">
    <text evidence="2">Homodimer. Part of the multimeric pyruvate dehydrogenase complex that contains multiple copies of pyruvate dehydrogenase (subunits PDHA (PDHA1 or PDHA2) and PDHB, E1), dihydrolipoamide acetyltransferase (DLAT, E2) and lipoamide dehydrogenase (DLD, E3). These subunits are bound to an inner core composed of about 48 DLAT and 12 PDHX molecules (by non covalent bonds). The 2-oxoglutarate dehydrogenase complex is composed of OGDH (2-oxoglutarate dehydrogenase; E1), DLST (dihydrolipoamide succinyltransferase; E2) and DLD (dihydrolipoamide dehydrogenase; E3). It contains multiple copies of the three enzymatic components (E1, E2 and E3). In the nucleus, the 2-oxoglutarate dehydrogenase complex associates with KAT2A. Interacts with PDHX.</text>
</comment>
<comment type="subcellular location">
    <subcellularLocation>
        <location evidence="2">Mitochondrion matrix</location>
    </subcellularLocation>
    <subcellularLocation>
        <location evidence="2">Nucleus</location>
    </subcellularLocation>
    <subcellularLocation>
        <location evidence="5">Cell projection</location>
        <location evidence="5">Cilium</location>
        <location evidence="5">Flagellum</location>
    </subcellularLocation>
    <subcellularLocation>
        <location evidence="5">Cytoplasmic vesicle</location>
        <location evidence="5">Secretory vesicle</location>
        <location evidence="5">Acrosome</location>
    </subcellularLocation>
    <text evidence="2">Mainly localizes in the mitochondrion. A small fraction localizes to the nucleus, where the 2-oxoglutarate dehydrogenase complex is required for histone succinylation.</text>
</comment>
<comment type="tissue specificity">
    <text evidence="5">Expressed in testis (at protein level).</text>
</comment>
<comment type="PTM">
    <text evidence="4 5">Tyrosine phosphorylated.</text>
</comment>
<comment type="miscellaneous">
    <text evidence="3">The active site is a redox-active disulfide bond.</text>
</comment>
<comment type="similarity">
    <text evidence="6">Belongs to the class-I pyridine nucleotide-disulfide oxidoreductase family.</text>
</comment>
<accession>Q811C4</accession>
<organism>
    <name type="scientific">Mesocricetus auratus</name>
    <name type="common">Golden hamster</name>
    <dbReference type="NCBI Taxonomy" id="10036"/>
    <lineage>
        <taxon>Eukaryota</taxon>
        <taxon>Metazoa</taxon>
        <taxon>Chordata</taxon>
        <taxon>Craniata</taxon>
        <taxon>Vertebrata</taxon>
        <taxon>Euteleostomi</taxon>
        <taxon>Mammalia</taxon>
        <taxon>Eutheria</taxon>
        <taxon>Euarchontoglires</taxon>
        <taxon>Glires</taxon>
        <taxon>Rodentia</taxon>
        <taxon>Myomorpha</taxon>
        <taxon>Muroidea</taxon>
        <taxon>Cricetidae</taxon>
        <taxon>Cricetinae</taxon>
        <taxon>Mesocricetus</taxon>
    </lineage>
</organism>
<gene>
    <name type="primary">DLD</name>
</gene>
<reference evidence="6 7" key="1">
    <citation type="journal article" date="2004" name="Biol. Reprod.">
        <title>Novel tyrosine-phosphorylated post-pyruvate metabolic enzyme, dihydrolipoamide dehydrogenase, involved in capacitation of hamster spermatozoa.</title>
        <authorList>
            <person name="Mitra K."/>
            <person name="Shivaji S."/>
        </authorList>
    </citation>
    <scope>NUCLEOTIDE SEQUENCE [MRNA]</scope>
    <scope>PROTEIN SEQUENCE OF 20-51</scope>
    <scope>FUNCTION</scope>
    <scope>PHOSPHORYLATION</scope>
    <source>
        <tissue evidence="4">Sperm</tissue>
        <tissue evidence="7">Testis</tissue>
    </source>
</reference>
<reference key="2">
    <citation type="journal article" date="2005" name="J. Biol. Chem.">
        <title>Novelty of the pyruvate metabolic enzyme dihydrolipoamide dehydrogenase in spermatozoa: correlation of its localization, tyrosine phosphorylation, and activity during sperm capacitation.</title>
        <authorList>
            <person name="Mitra K."/>
            <person name="Rangaraj N."/>
            <person name="Shivaji S."/>
        </authorList>
    </citation>
    <scope>FUNCTION</scope>
    <scope>CATALYTIC ACTIVITY</scope>
    <scope>SUBCELLULAR LOCATION</scope>
    <scope>TISSUE SPECIFICITY</scope>
    <scope>PHOSPHORYLATION</scope>
</reference>
<reference key="3">
    <citation type="journal article" date="2010" name="Asian J. Androl.">
        <title>Glucose-regulated protein precursor (GRP78) and tumor rejection antigen (GP96) are unique to hamster caput epididymal spermatozoa.</title>
        <authorList>
            <person name="Kameshwari D.B."/>
            <person name="Bhande S."/>
            <person name="Sundaram C.S."/>
            <person name="Kota V."/>
            <person name="Siva A.B."/>
            <person name="Shivaji S."/>
        </authorList>
    </citation>
    <scope>IDENTIFICATION BY MASS SPECTROMETRY</scope>
</reference>
<evidence type="ECO:0000250" key="1">
    <source>
        <dbReference type="UniProtKB" id="O08749"/>
    </source>
</evidence>
<evidence type="ECO:0000250" key="2">
    <source>
        <dbReference type="UniProtKB" id="P09622"/>
    </source>
</evidence>
<evidence type="ECO:0000250" key="3">
    <source>
        <dbReference type="UniProtKB" id="P09624"/>
    </source>
</evidence>
<evidence type="ECO:0000269" key="4">
    <source>
    </source>
</evidence>
<evidence type="ECO:0000269" key="5">
    <source>
    </source>
</evidence>
<evidence type="ECO:0000305" key="6"/>
<evidence type="ECO:0000312" key="7">
    <source>
        <dbReference type="EMBL" id="CAD61860.1"/>
    </source>
</evidence>
<dbReference type="EC" id="1.8.1.4" evidence="5"/>
<dbReference type="EMBL" id="AJ538298">
    <property type="protein sequence ID" value="CAD61860.1"/>
    <property type="molecule type" value="mRNA"/>
</dbReference>
<dbReference type="STRING" id="10036.ENSMAUP00000016215"/>
<dbReference type="eggNOG" id="KOG1335">
    <property type="taxonomic scope" value="Eukaryota"/>
</dbReference>
<dbReference type="BRENDA" id="1.8.1.4">
    <property type="organism ID" value="3239"/>
</dbReference>
<dbReference type="Proteomes" id="UP000189706">
    <property type="component" value="Unplaced"/>
</dbReference>
<dbReference type="GO" id="GO:0001669">
    <property type="term" value="C:acrosomal vesicle"/>
    <property type="evidence" value="ECO:0007669"/>
    <property type="project" value="UniProtKB-SubCell"/>
</dbReference>
<dbReference type="GO" id="GO:0005759">
    <property type="term" value="C:mitochondrial matrix"/>
    <property type="evidence" value="ECO:0007669"/>
    <property type="project" value="UniProtKB-SubCell"/>
</dbReference>
<dbReference type="GO" id="GO:0005739">
    <property type="term" value="C:mitochondrion"/>
    <property type="evidence" value="ECO:0000250"/>
    <property type="project" value="UniProtKB"/>
</dbReference>
<dbReference type="GO" id="GO:0031514">
    <property type="term" value="C:motile cilium"/>
    <property type="evidence" value="ECO:0007669"/>
    <property type="project" value="UniProtKB-SubCell"/>
</dbReference>
<dbReference type="GO" id="GO:0005634">
    <property type="term" value="C:nucleus"/>
    <property type="evidence" value="ECO:0000250"/>
    <property type="project" value="UniProtKB"/>
</dbReference>
<dbReference type="GO" id="GO:0045252">
    <property type="term" value="C:oxoglutarate dehydrogenase complex"/>
    <property type="evidence" value="ECO:0000250"/>
    <property type="project" value="UniProtKB"/>
</dbReference>
<dbReference type="GO" id="GO:0004148">
    <property type="term" value="F:dihydrolipoyl dehydrogenase (NADH) activity"/>
    <property type="evidence" value="ECO:0000250"/>
    <property type="project" value="UniProtKB"/>
</dbReference>
<dbReference type="GO" id="GO:0050660">
    <property type="term" value="F:flavin adenine dinucleotide binding"/>
    <property type="evidence" value="ECO:0007669"/>
    <property type="project" value="InterPro"/>
</dbReference>
<dbReference type="GO" id="GO:0006103">
    <property type="term" value="P:2-oxoglutarate metabolic process"/>
    <property type="evidence" value="ECO:0007669"/>
    <property type="project" value="TreeGrafter"/>
</dbReference>
<dbReference type="FunFam" id="3.30.390.30:FF:000001">
    <property type="entry name" value="Dihydrolipoyl dehydrogenase"/>
    <property type="match status" value="1"/>
</dbReference>
<dbReference type="FunFam" id="3.50.50.60:FF:000025">
    <property type="entry name" value="Dihydrolipoyl dehydrogenase"/>
    <property type="match status" value="1"/>
</dbReference>
<dbReference type="FunFam" id="3.50.50.60:FF:000221">
    <property type="entry name" value="Dihydrolipoyl dehydrogenase, mitochondrial"/>
    <property type="match status" value="1"/>
</dbReference>
<dbReference type="Gene3D" id="3.30.390.30">
    <property type="match status" value="1"/>
</dbReference>
<dbReference type="Gene3D" id="3.50.50.60">
    <property type="entry name" value="FAD/NAD(P)-binding domain"/>
    <property type="match status" value="2"/>
</dbReference>
<dbReference type="InterPro" id="IPR050151">
    <property type="entry name" value="Class-I_Pyr_Nuc-Dis_Oxidored"/>
</dbReference>
<dbReference type="InterPro" id="IPR036188">
    <property type="entry name" value="FAD/NAD-bd_sf"/>
</dbReference>
<dbReference type="InterPro" id="IPR023753">
    <property type="entry name" value="FAD/NAD-binding_dom"/>
</dbReference>
<dbReference type="InterPro" id="IPR016156">
    <property type="entry name" value="FAD/NAD-linked_Rdtase_dimer_sf"/>
</dbReference>
<dbReference type="InterPro" id="IPR006258">
    <property type="entry name" value="Lipoamide_DH"/>
</dbReference>
<dbReference type="InterPro" id="IPR001100">
    <property type="entry name" value="Pyr_nuc-diS_OxRdtase"/>
</dbReference>
<dbReference type="InterPro" id="IPR004099">
    <property type="entry name" value="Pyr_nucl-diS_OxRdtase_dimer"/>
</dbReference>
<dbReference type="InterPro" id="IPR012999">
    <property type="entry name" value="Pyr_OxRdtase_I_AS"/>
</dbReference>
<dbReference type="NCBIfam" id="TIGR01350">
    <property type="entry name" value="lipoamide_DH"/>
    <property type="match status" value="1"/>
</dbReference>
<dbReference type="PANTHER" id="PTHR22912:SF151">
    <property type="entry name" value="DIHYDROLIPOYL DEHYDROGENASE, MITOCHONDRIAL"/>
    <property type="match status" value="1"/>
</dbReference>
<dbReference type="PANTHER" id="PTHR22912">
    <property type="entry name" value="DISULFIDE OXIDOREDUCTASE"/>
    <property type="match status" value="1"/>
</dbReference>
<dbReference type="Pfam" id="PF07992">
    <property type="entry name" value="Pyr_redox_2"/>
    <property type="match status" value="1"/>
</dbReference>
<dbReference type="Pfam" id="PF02852">
    <property type="entry name" value="Pyr_redox_dim"/>
    <property type="match status" value="1"/>
</dbReference>
<dbReference type="PIRSF" id="PIRSF000350">
    <property type="entry name" value="Mercury_reductase_MerA"/>
    <property type="match status" value="1"/>
</dbReference>
<dbReference type="PRINTS" id="PR00368">
    <property type="entry name" value="FADPNR"/>
</dbReference>
<dbReference type="PRINTS" id="PR00411">
    <property type="entry name" value="PNDRDTASEI"/>
</dbReference>
<dbReference type="SUPFAM" id="SSF51905">
    <property type="entry name" value="FAD/NAD(P)-binding domain"/>
    <property type="match status" value="1"/>
</dbReference>
<dbReference type="SUPFAM" id="SSF55424">
    <property type="entry name" value="FAD/NAD-linked reductases, dimerisation (C-terminal) domain"/>
    <property type="match status" value="1"/>
</dbReference>
<dbReference type="PROSITE" id="PS00076">
    <property type="entry name" value="PYRIDINE_REDOX_1"/>
    <property type="match status" value="1"/>
</dbReference>
<sequence length="479" mass="50723">FNRXSPGLQGVSSVPLRTYADQPIDADVTVIGSGPGGYVAAIKAAQLGFKTVCIEKNETLGGTCLNVGCIPSKALLNNSHYYHLAHGKDFASRGIELSEVRLNLEKMMEQKSSAVKALTGGIAHLFKQNKVVHVNGFGNITGKNQVTATKADGSSQVIGTKNILIATGSEVTPFPGITIDEDTIVSSTGALSLKKVPEKLVVIGAGVIGVELGSVWQRLGAEVTAVEFLGHVGGIGIDMEISKKFQRILQKQGFKFKLNPKVPGATKRSDGKIDVSVEAAPGGKAEVIPCDVLLVCIGRRPFTQNLGLEELGIELDPRGRIPVNTRFQTKIPNIYAIGDVVAGPMLAHKAEDEGIICVEGMAGGAVHIDYNCVPSVIYTHPEVAWVGKSEEQLKEEGIEYKVGKFPFAANSRAKTNADTDGMVKILGQKSTDRVLGAHILGPGAGEMVNEAALALEYGASCEDIARVCHAHPTLSEAFR</sequence>
<protein>
    <recommendedName>
        <fullName evidence="2">Dihydrolipoyl dehydrogenase, mitochondrial</fullName>
        <ecNumber evidence="5">1.8.1.4</ecNumber>
    </recommendedName>
    <alternativeName>
        <fullName evidence="2">Dihydrolipoamide dehydrogenase</fullName>
    </alternativeName>
</protein>
<name>DLDH_MESAU</name>